<feature type="chain" id="PRO_0000212304" description="Holliday junction resolvase RecU">
    <location>
        <begin position="1"/>
        <end position="208"/>
    </location>
</feature>
<feature type="binding site" evidence="1">
    <location>
        <position position="87"/>
    </location>
    <ligand>
        <name>Mg(2+)</name>
        <dbReference type="ChEBI" id="CHEBI:18420"/>
    </ligand>
</feature>
<feature type="binding site" evidence="1">
    <location>
        <position position="89"/>
    </location>
    <ligand>
        <name>Mg(2+)</name>
        <dbReference type="ChEBI" id="CHEBI:18420"/>
    </ligand>
</feature>
<feature type="binding site" evidence="1">
    <location>
        <position position="102"/>
    </location>
    <ligand>
        <name>Mg(2+)</name>
        <dbReference type="ChEBI" id="CHEBI:18420"/>
    </ligand>
</feature>
<feature type="binding site" evidence="1">
    <location>
        <position position="121"/>
    </location>
    <ligand>
        <name>Mg(2+)</name>
        <dbReference type="ChEBI" id="CHEBI:18420"/>
    </ligand>
</feature>
<feature type="site" description="Transition state stabilizer" evidence="1">
    <location>
        <position position="104"/>
    </location>
</feature>
<sequence>MNYPNGKPYRKNSAIDGGKKTAAFSNIEYGGRGMSLEKDIEHSNTFYLKSDIAVIHKKPTPVQIVNVNYPKRSKAVINEAYFRTPSTTDYNGVYQGYYIDFEAKETKNKTSFPLNNIHDHQVEHMKNAYQQKGIVFLMIRFKTLDEVYLLPYSKFEVFWKRYKDNIKKSITVDEIRKNGYHIPYQYQPRLDYLKAVDKLILDESEDRV</sequence>
<dbReference type="EC" id="3.1.21.10" evidence="1"/>
<dbReference type="EMBL" id="BA000018">
    <property type="protein sequence ID" value="BAB42542.1"/>
    <property type="molecule type" value="Genomic_DNA"/>
</dbReference>
<dbReference type="PIR" id="A89923">
    <property type="entry name" value="A89923"/>
</dbReference>
<dbReference type="RefSeq" id="WP_001108889.1">
    <property type="nucleotide sequence ID" value="NC_002745.2"/>
</dbReference>
<dbReference type="SMR" id="P68817"/>
<dbReference type="EnsemblBacteria" id="BAB42542">
    <property type="protein sequence ID" value="BAB42542"/>
    <property type="gene ID" value="BAB42542"/>
</dbReference>
<dbReference type="KEGG" id="sau:SA1282"/>
<dbReference type="HOGENOM" id="CLU_096340_0_0_9"/>
<dbReference type="GO" id="GO:0005737">
    <property type="term" value="C:cytoplasm"/>
    <property type="evidence" value="ECO:0007669"/>
    <property type="project" value="UniProtKB-SubCell"/>
</dbReference>
<dbReference type="GO" id="GO:0004519">
    <property type="term" value="F:endonuclease activity"/>
    <property type="evidence" value="ECO:0007669"/>
    <property type="project" value="UniProtKB-UniRule"/>
</dbReference>
<dbReference type="GO" id="GO:0000287">
    <property type="term" value="F:magnesium ion binding"/>
    <property type="evidence" value="ECO:0007669"/>
    <property type="project" value="UniProtKB-UniRule"/>
</dbReference>
<dbReference type="GO" id="GO:0003676">
    <property type="term" value="F:nucleic acid binding"/>
    <property type="evidence" value="ECO:0007669"/>
    <property type="project" value="InterPro"/>
</dbReference>
<dbReference type="GO" id="GO:0007059">
    <property type="term" value="P:chromosome segregation"/>
    <property type="evidence" value="ECO:0007669"/>
    <property type="project" value="UniProtKB-UniRule"/>
</dbReference>
<dbReference type="GO" id="GO:0006310">
    <property type="term" value="P:DNA recombination"/>
    <property type="evidence" value="ECO:0007669"/>
    <property type="project" value="UniProtKB-UniRule"/>
</dbReference>
<dbReference type="GO" id="GO:0006281">
    <property type="term" value="P:DNA repair"/>
    <property type="evidence" value="ECO:0007669"/>
    <property type="project" value="UniProtKB-UniRule"/>
</dbReference>
<dbReference type="CDD" id="cd22354">
    <property type="entry name" value="RecU-like"/>
    <property type="match status" value="1"/>
</dbReference>
<dbReference type="Gene3D" id="3.40.1350.10">
    <property type="match status" value="1"/>
</dbReference>
<dbReference type="HAMAP" id="MF_00130">
    <property type="entry name" value="RecU"/>
    <property type="match status" value="1"/>
</dbReference>
<dbReference type="InterPro" id="IPR004612">
    <property type="entry name" value="Resolv_RecU"/>
</dbReference>
<dbReference type="InterPro" id="IPR011335">
    <property type="entry name" value="Restrct_endonuc-II-like"/>
</dbReference>
<dbReference type="InterPro" id="IPR011856">
    <property type="entry name" value="tRNA_endonuc-like_dom_sf"/>
</dbReference>
<dbReference type="NCBIfam" id="NF002581">
    <property type="entry name" value="PRK02234.1-2"/>
    <property type="match status" value="1"/>
</dbReference>
<dbReference type="NCBIfam" id="NF002583">
    <property type="entry name" value="PRK02234.1-4"/>
    <property type="match status" value="1"/>
</dbReference>
<dbReference type="NCBIfam" id="NF002584">
    <property type="entry name" value="PRK02234.1-5"/>
    <property type="match status" value="1"/>
</dbReference>
<dbReference type="NCBIfam" id="TIGR00648">
    <property type="entry name" value="recU"/>
    <property type="match status" value="1"/>
</dbReference>
<dbReference type="Pfam" id="PF03838">
    <property type="entry name" value="RecU"/>
    <property type="match status" value="1"/>
</dbReference>
<dbReference type="PIRSF" id="PIRSF037785">
    <property type="entry name" value="RecU"/>
    <property type="match status" value="1"/>
</dbReference>
<dbReference type="SUPFAM" id="SSF52980">
    <property type="entry name" value="Restriction endonuclease-like"/>
    <property type="match status" value="1"/>
</dbReference>
<protein>
    <recommendedName>
        <fullName evidence="1">Holliday junction resolvase RecU</fullName>
        <ecNumber evidence="1">3.1.21.10</ecNumber>
    </recommendedName>
    <alternativeName>
        <fullName evidence="1">Recombination protein U homolog</fullName>
    </alternativeName>
</protein>
<comment type="function">
    <text evidence="1">Endonuclease that resolves Holliday junction intermediates in genetic recombination. Cleaves mobile four-strand junctions by introducing symmetrical nicks in paired strands. Promotes annealing of linear ssDNA with homologous dsDNA. Required for DNA repair, homologous recombination and chromosome segregation.</text>
</comment>
<comment type="catalytic activity">
    <reaction evidence="1">
        <text>Endonucleolytic cleavage at a junction such as a reciprocal single-stranded crossover between two homologous DNA duplexes (Holliday junction).</text>
        <dbReference type="EC" id="3.1.21.10"/>
    </reaction>
</comment>
<comment type="cofactor">
    <cofactor evidence="1">
        <name>Mg(2+)</name>
        <dbReference type="ChEBI" id="CHEBI:18420"/>
    </cofactor>
    <text evidence="1">Binds 1 Mg(2+) ion per subunit.</text>
</comment>
<comment type="subcellular location">
    <subcellularLocation>
        <location evidence="1">Cytoplasm</location>
    </subcellularLocation>
</comment>
<comment type="similarity">
    <text evidence="1">Belongs to the RecU family.</text>
</comment>
<accession>P68817</accession>
<accession>Q9ZAG8</accession>
<keyword id="KW-0963">Cytoplasm</keyword>
<keyword id="KW-0227">DNA damage</keyword>
<keyword id="KW-0233">DNA recombination</keyword>
<keyword id="KW-0234">DNA repair</keyword>
<keyword id="KW-0255">Endonuclease</keyword>
<keyword id="KW-0378">Hydrolase</keyword>
<keyword id="KW-0460">Magnesium</keyword>
<keyword id="KW-0479">Metal-binding</keyword>
<keyword id="KW-0540">Nuclease</keyword>
<organism>
    <name type="scientific">Staphylococcus aureus (strain N315)</name>
    <dbReference type="NCBI Taxonomy" id="158879"/>
    <lineage>
        <taxon>Bacteria</taxon>
        <taxon>Bacillati</taxon>
        <taxon>Bacillota</taxon>
        <taxon>Bacilli</taxon>
        <taxon>Bacillales</taxon>
        <taxon>Staphylococcaceae</taxon>
        <taxon>Staphylococcus</taxon>
    </lineage>
</organism>
<proteinExistence type="evidence at protein level"/>
<evidence type="ECO:0000255" key="1">
    <source>
        <dbReference type="HAMAP-Rule" id="MF_00130"/>
    </source>
</evidence>
<reference key="1">
    <citation type="journal article" date="2001" name="Lancet">
        <title>Whole genome sequencing of meticillin-resistant Staphylococcus aureus.</title>
        <authorList>
            <person name="Kuroda M."/>
            <person name="Ohta T."/>
            <person name="Uchiyama I."/>
            <person name="Baba T."/>
            <person name="Yuzawa H."/>
            <person name="Kobayashi I."/>
            <person name="Cui L."/>
            <person name="Oguchi A."/>
            <person name="Aoki K."/>
            <person name="Nagai Y."/>
            <person name="Lian J.-Q."/>
            <person name="Ito T."/>
            <person name="Kanamori M."/>
            <person name="Matsumaru H."/>
            <person name="Maruyama A."/>
            <person name="Murakami H."/>
            <person name="Hosoyama A."/>
            <person name="Mizutani-Ui Y."/>
            <person name="Takahashi N.K."/>
            <person name="Sawano T."/>
            <person name="Inoue R."/>
            <person name="Kaito C."/>
            <person name="Sekimizu K."/>
            <person name="Hirakawa H."/>
            <person name="Kuhara S."/>
            <person name="Goto S."/>
            <person name="Yabuzaki J."/>
            <person name="Kanehisa M."/>
            <person name="Yamashita A."/>
            <person name="Oshima K."/>
            <person name="Furuya K."/>
            <person name="Yoshino C."/>
            <person name="Shiba T."/>
            <person name="Hattori M."/>
            <person name="Ogasawara N."/>
            <person name="Hayashi H."/>
            <person name="Hiramatsu K."/>
        </authorList>
    </citation>
    <scope>NUCLEOTIDE SEQUENCE [LARGE SCALE GENOMIC DNA]</scope>
    <source>
        <strain>N315</strain>
    </source>
</reference>
<reference key="2">
    <citation type="submission" date="2007-10" db="UniProtKB">
        <title>Shotgun proteomic analysis of total and membrane protein extracts of S. aureus strain N315.</title>
        <authorList>
            <person name="Vaezzadeh A.R."/>
            <person name="Deshusses J."/>
            <person name="Lescuyer P."/>
            <person name="Hochstrasser D.F."/>
        </authorList>
    </citation>
    <scope>IDENTIFICATION BY MASS SPECTROMETRY [LARGE SCALE ANALYSIS]</scope>
    <source>
        <strain>N315</strain>
    </source>
</reference>
<gene>
    <name evidence="1" type="primary">recU</name>
    <name type="ordered locus">SA1282</name>
</gene>
<name>RECU_STAAN</name>